<geneLocation type="chloroplast"/>
<proteinExistence type="inferred from homology"/>
<sequence length="360" mass="39631">MTATLERRESASLWERFCSWITSTENRLYIGWFGVLMIPTLLTATTVFIIAFIAAPPVDIDGIREPVAGSLLYGNNIITGAVIPSSASIGIHFYPIWEAASLDEWLYNGGPYQLIVDHFLLGVCGWIGREWEFSYRLGMRPWISVAFTAPVAAASAVFLVYPIGQGSFSDGMPLGISGTFNFMLVFQAEHNILMHPFHQLGVAGVFGGSLFSAMHGSLVTSSLIRETTENESANYGYKFGQEEETYNIVAAHGYFGRLIFQYASFNNSRALHFFLGLWPVVGIWFTALGIMTMAFNLNGFNFNQSVVDSQGRVINTWADILNRANLGIEVMHERNAHNFPLDLASGESLPVALTAPAVIG</sequence>
<keyword id="KW-0106">Calcium</keyword>
<keyword id="KW-0148">Chlorophyll</keyword>
<keyword id="KW-0150">Chloroplast</keyword>
<keyword id="KW-0157">Chromophore</keyword>
<keyword id="KW-0249">Electron transport</keyword>
<keyword id="KW-0359">Herbicide resistance</keyword>
<keyword id="KW-0408">Iron</keyword>
<keyword id="KW-0460">Magnesium</keyword>
<keyword id="KW-0464">Manganese</keyword>
<keyword id="KW-0472">Membrane</keyword>
<keyword id="KW-0479">Metal-binding</keyword>
<keyword id="KW-0560">Oxidoreductase</keyword>
<keyword id="KW-0602">Photosynthesis</keyword>
<keyword id="KW-0604">Photosystem II</keyword>
<keyword id="KW-0934">Plastid</keyword>
<keyword id="KW-0793">Thylakoid</keyword>
<keyword id="KW-0812">Transmembrane</keyword>
<keyword id="KW-1133">Transmembrane helix</keyword>
<keyword id="KW-0813">Transport</keyword>
<feature type="chain" id="PRO_0000090443" description="Photosystem II protein D1" evidence="1">
    <location>
        <begin position="1"/>
        <end position="344"/>
    </location>
</feature>
<feature type="propeptide" id="PRO_0000431679" evidence="1">
    <location>
        <begin position="345"/>
        <end position="360"/>
    </location>
</feature>
<feature type="transmembrane region" description="Helical" evidence="1">
    <location>
        <begin position="29"/>
        <end position="46"/>
    </location>
</feature>
<feature type="transmembrane region" description="Helical" evidence="1">
    <location>
        <begin position="118"/>
        <end position="133"/>
    </location>
</feature>
<feature type="transmembrane region" description="Helical" evidence="1">
    <location>
        <begin position="142"/>
        <end position="156"/>
    </location>
</feature>
<feature type="transmembrane region" description="Helical" evidence="1">
    <location>
        <begin position="197"/>
        <end position="218"/>
    </location>
</feature>
<feature type="transmembrane region" description="Helical" evidence="1">
    <location>
        <begin position="274"/>
        <end position="288"/>
    </location>
</feature>
<feature type="binding site" description="axial binding residue" evidence="1">
    <location>
        <position position="118"/>
    </location>
    <ligand>
        <name>chlorophyll a</name>
        <dbReference type="ChEBI" id="CHEBI:58416"/>
        <label>ChlzD1</label>
    </ligand>
    <ligandPart>
        <name>Mg</name>
        <dbReference type="ChEBI" id="CHEBI:25107"/>
    </ligandPart>
</feature>
<feature type="binding site" evidence="1">
    <location>
        <position position="126"/>
    </location>
    <ligand>
        <name>pheophytin a</name>
        <dbReference type="ChEBI" id="CHEBI:136840"/>
        <label>D1</label>
    </ligand>
</feature>
<feature type="binding site" evidence="1">
    <location>
        <position position="170"/>
    </location>
    <ligand>
        <name>[CaMn4O5] cluster</name>
        <dbReference type="ChEBI" id="CHEBI:189552"/>
    </ligand>
</feature>
<feature type="binding site" evidence="1">
    <location>
        <position position="189"/>
    </location>
    <ligand>
        <name>[CaMn4O5] cluster</name>
        <dbReference type="ChEBI" id="CHEBI:189552"/>
    </ligand>
</feature>
<feature type="binding site" description="axial binding residue" evidence="1">
    <location>
        <position position="198"/>
    </location>
    <ligand>
        <name>chlorophyll a</name>
        <dbReference type="ChEBI" id="CHEBI:58416"/>
        <label>PD1</label>
    </ligand>
    <ligandPart>
        <name>Mg</name>
        <dbReference type="ChEBI" id="CHEBI:25107"/>
    </ligandPart>
</feature>
<feature type="binding site" evidence="1">
    <location>
        <position position="215"/>
    </location>
    <ligand>
        <name>a quinone</name>
        <dbReference type="ChEBI" id="CHEBI:132124"/>
        <label>B</label>
    </ligand>
</feature>
<feature type="binding site" evidence="1">
    <location>
        <position position="215"/>
    </location>
    <ligand>
        <name>Fe cation</name>
        <dbReference type="ChEBI" id="CHEBI:24875"/>
        <note>ligand shared with heterodimeric partner</note>
    </ligand>
</feature>
<feature type="binding site" evidence="1">
    <location>
        <begin position="264"/>
        <end position="265"/>
    </location>
    <ligand>
        <name>a quinone</name>
        <dbReference type="ChEBI" id="CHEBI:132124"/>
        <label>B</label>
    </ligand>
</feature>
<feature type="binding site" evidence="1">
    <location>
        <position position="272"/>
    </location>
    <ligand>
        <name>Fe cation</name>
        <dbReference type="ChEBI" id="CHEBI:24875"/>
        <note>ligand shared with heterodimeric partner</note>
    </ligand>
</feature>
<feature type="binding site" evidence="1">
    <location>
        <position position="332"/>
    </location>
    <ligand>
        <name>[CaMn4O5] cluster</name>
        <dbReference type="ChEBI" id="CHEBI:189552"/>
    </ligand>
</feature>
<feature type="binding site" evidence="1">
    <location>
        <position position="333"/>
    </location>
    <ligand>
        <name>[CaMn4O5] cluster</name>
        <dbReference type="ChEBI" id="CHEBI:189552"/>
    </ligand>
</feature>
<feature type="binding site" evidence="1">
    <location>
        <position position="342"/>
    </location>
    <ligand>
        <name>[CaMn4O5] cluster</name>
        <dbReference type="ChEBI" id="CHEBI:189552"/>
    </ligand>
</feature>
<feature type="binding site" evidence="1">
    <location>
        <position position="344"/>
    </location>
    <ligand>
        <name>[CaMn4O5] cluster</name>
        <dbReference type="ChEBI" id="CHEBI:189552"/>
    </ligand>
</feature>
<feature type="site" description="Tyrosine radical intermediate" evidence="1">
    <location>
        <position position="161"/>
    </location>
</feature>
<feature type="site" description="Stabilizes free radical intermediate" evidence="1">
    <location>
        <position position="190"/>
    </location>
</feature>
<feature type="site" description="Cleavage; by CTPA" evidence="1">
    <location>
        <begin position="344"/>
        <end position="345"/>
    </location>
</feature>
<gene>
    <name evidence="1" type="primary">psbA</name>
</gene>
<comment type="function">
    <text evidence="1">Photosystem II (PSII) is a light-driven water:plastoquinone oxidoreductase that uses light energy to abstract electrons from H(2)O, generating O(2) and a proton gradient subsequently used for ATP formation. It consists of a core antenna complex that captures photons, and an electron transfer chain that converts photonic excitation into a charge separation. The D1/D2 (PsbA/PsbD) reaction center heterodimer binds P680, the primary electron donor of PSII as well as several subsequent electron acceptors.</text>
</comment>
<comment type="catalytic activity">
    <reaction evidence="1">
        <text>2 a plastoquinone + 4 hnu + 2 H2O = 2 a plastoquinol + O2</text>
        <dbReference type="Rhea" id="RHEA:36359"/>
        <dbReference type="Rhea" id="RHEA-COMP:9561"/>
        <dbReference type="Rhea" id="RHEA-COMP:9562"/>
        <dbReference type="ChEBI" id="CHEBI:15377"/>
        <dbReference type="ChEBI" id="CHEBI:15379"/>
        <dbReference type="ChEBI" id="CHEBI:17757"/>
        <dbReference type="ChEBI" id="CHEBI:30212"/>
        <dbReference type="ChEBI" id="CHEBI:62192"/>
        <dbReference type="EC" id="1.10.3.9"/>
    </reaction>
</comment>
<comment type="cofactor">
    <text evidence="1">The D1/D2 heterodimer binds P680, chlorophylls that are the primary electron donor of PSII, and subsequent electron acceptors. It shares a non-heme iron and each subunit binds pheophytin, quinone, additional chlorophylls, carotenoids and lipids. D1 provides most of the ligands for the Mn4-Ca-O5 cluster of the oxygen-evolving complex (OEC). There is also a Cl(-1) ion associated with D1 and D2, which is required for oxygen evolution. The PSII complex binds additional chlorophylls, carotenoids and specific lipids.</text>
</comment>
<comment type="subunit">
    <text evidence="1">PSII is composed of 1 copy each of membrane proteins PsbA, PsbB, PsbC, PsbD, PsbE, PsbF, PsbH, PsbI, PsbJ, PsbK, PsbL, PsbM, PsbT, PsbX, PsbY, PsbZ, Psb30/Ycf12, at least 3 peripheral proteins of the oxygen-evolving complex and a large number of cofactors. It forms dimeric complexes.</text>
</comment>
<comment type="subcellular location">
    <subcellularLocation>
        <location evidence="1">Plastid</location>
        <location evidence="1">Chloroplast thylakoid membrane</location>
        <topology evidence="1">Multi-pass membrane protein</topology>
    </subcellularLocation>
</comment>
<comment type="PTM">
    <text evidence="1">Tyr-161 forms a radical intermediate that is referred to as redox-active TyrZ, YZ or Y-Z.</text>
</comment>
<comment type="PTM">
    <text evidence="1">C-terminally processed by CTPA; processing is essential to allow assembly of the oxygen-evolving complex and thus photosynthetic growth.</text>
</comment>
<comment type="miscellaneous">
    <text evidence="1">2 of the reaction center chlorophylls (ChlD1 and ChlD2) are entirely coordinated by water.</text>
</comment>
<comment type="miscellaneous">
    <text evidence="1">Herbicides such as atrazine, BNT, diuron or ioxynil bind in the Q(B) binding site and block subsequent electron transfer.</text>
</comment>
<comment type="similarity">
    <text evidence="1">Belongs to the reaction center PufL/M/PsbA/D family.</text>
</comment>
<reference key="1">
    <citation type="journal article" date="1999" name="J. Mol. Evol.">
        <title>The plastid genome of the cryptophyte alga, Guillardia theta: complete sequence and conserved synteny groups confirm its common ancestry with red algae.</title>
        <authorList>
            <person name="Douglas S.E."/>
            <person name="Penny S.L."/>
        </authorList>
    </citation>
    <scope>NUCLEOTIDE SEQUENCE [LARGE SCALE GENOMIC DNA]</scope>
</reference>
<dbReference type="EC" id="1.10.3.9" evidence="1"/>
<dbReference type="EMBL" id="AF041468">
    <property type="protein sequence ID" value="AAC35633.1"/>
    <property type="molecule type" value="Genomic_DNA"/>
</dbReference>
<dbReference type="RefSeq" id="NP_050699.1">
    <property type="nucleotide sequence ID" value="NC_000926.1"/>
</dbReference>
<dbReference type="SMR" id="O78446"/>
<dbReference type="GeneID" id="856990"/>
<dbReference type="HOGENOM" id="CLU_054206_1_0_1"/>
<dbReference type="OMA" id="CQWVTDT"/>
<dbReference type="GO" id="GO:0009535">
    <property type="term" value="C:chloroplast thylakoid membrane"/>
    <property type="evidence" value="ECO:0007669"/>
    <property type="project" value="UniProtKB-SubCell"/>
</dbReference>
<dbReference type="GO" id="GO:0009523">
    <property type="term" value="C:photosystem II"/>
    <property type="evidence" value="ECO:0007669"/>
    <property type="project" value="UniProtKB-KW"/>
</dbReference>
<dbReference type="GO" id="GO:0016168">
    <property type="term" value="F:chlorophyll binding"/>
    <property type="evidence" value="ECO:0007669"/>
    <property type="project" value="UniProtKB-UniRule"/>
</dbReference>
<dbReference type="GO" id="GO:0045156">
    <property type="term" value="F:electron transporter, transferring electrons within the cyclic electron transport pathway of photosynthesis activity"/>
    <property type="evidence" value="ECO:0007669"/>
    <property type="project" value="InterPro"/>
</dbReference>
<dbReference type="GO" id="GO:0005506">
    <property type="term" value="F:iron ion binding"/>
    <property type="evidence" value="ECO:0007669"/>
    <property type="project" value="UniProtKB-UniRule"/>
</dbReference>
<dbReference type="GO" id="GO:0016682">
    <property type="term" value="F:oxidoreductase activity, acting on diphenols and related substances as donors, oxygen as acceptor"/>
    <property type="evidence" value="ECO:0007669"/>
    <property type="project" value="UniProtKB-UniRule"/>
</dbReference>
<dbReference type="GO" id="GO:0009772">
    <property type="term" value="P:photosynthetic electron transport in photosystem II"/>
    <property type="evidence" value="ECO:0007669"/>
    <property type="project" value="InterPro"/>
</dbReference>
<dbReference type="GO" id="GO:0009635">
    <property type="term" value="P:response to herbicide"/>
    <property type="evidence" value="ECO:0007669"/>
    <property type="project" value="UniProtKB-KW"/>
</dbReference>
<dbReference type="CDD" id="cd09289">
    <property type="entry name" value="Photosystem-II_D1"/>
    <property type="match status" value="1"/>
</dbReference>
<dbReference type="FunFam" id="1.20.85.10:FF:000002">
    <property type="entry name" value="Photosystem II protein D1"/>
    <property type="match status" value="1"/>
</dbReference>
<dbReference type="Gene3D" id="1.20.85.10">
    <property type="entry name" value="Photosystem II protein D1-like"/>
    <property type="match status" value="1"/>
</dbReference>
<dbReference type="HAMAP" id="MF_01379">
    <property type="entry name" value="PSII_PsbA_D1"/>
    <property type="match status" value="1"/>
</dbReference>
<dbReference type="InterPro" id="IPR055266">
    <property type="entry name" value="D1/D2"/>
</dbReference>
<dbReference type="InterPro" id="IPR036854">
    <property type="entry name" value="Photo_II_D1/D2_sf"/>
</dbReference>
<dbReference type="InterPro" id="IPR000484">
    <property type="entry name" value="Photo_RC_L/M"/>
</dbReference>
<dbReference type="InterPro" id="IPR055265">
    <property type="entry name" value="Photo_RC_L/M_CS"/>
</dbReference>
<dbReference type="InterPro" id="IPR005867">
    <property type="entry name" value="PSII_D1"/>
</dbReference>
<dbReference type="NCBIfam" id="TIGR01151">
    <property type="entry name" value="psbA"/>
    <property type="match status" value="1"/>
</dbReference>
<dbReference type="PANTHER" id="PTHR33149:SF12">
    <property type="entry name" value="PHOTOSYSTEM II D2 PROTEIN"/>
    <property type="match status" value="1"/>
</dbReference>
<dbReference type="PANTHER" id="PTHR33149">
    <property type="entry name" value="PHOTOSYSTEM II PROTEIN D1"/>
    <property type="match status" value="1"/>
</dbReference>
<dbReference type="Pfam" id="PF00124">
    <property type="entry name" value="Photo_RC"/>
    <property type="match status" value="1"/>
</dbReference>
<dbReference type="PRINTS" id="PR00256">
    <property type="entry name" value="REACTNCENTRE"/>
</dbReference>
<dbReference type="SUPFAM" id="SSF81483">
    <property type="entry name" value="Bacterial photosystem II reaction centre, L and M subunits"/>
    <property type="match status" value="1"/>
</dbReference>
<dbReference type="PROSITE" id="PS00244">
    <property type="entry name" value="REACTION_CENTER"/>
    <property type="match status" value="1"/>
</dbReference>
<protein>
    <recommendedName>
        <fullName evidence="1">Photosystem II protein D1</fullName>
        <shortName evidence="1">PSII D1 protein</shortName>
        <ecNumber evidence="1">1.10.3.9</ecNumber>
    </recommendedName>
    <alternativeName>
        <fullName evidence="1">Photosystem II Q(B) protein</fullName>
    </alternativeName>
</protein>
<organism>
    <name type="scientific">Guillardia theta</name>
    <name type="common">Cryptophyte</name>
    <name type="synonym">Cryptomonas phi</name>
    <dbReference type="NCBI Taxonomy" id="55529"/>
    <lineage>
        <taxon>Eukaryota</taxon>
        <taxon>Cryptophyceae</taxon>
        <taxon>Pyrenomonadales</taxon>
        <taxon>Geminigeraceae</taxon>
        <taxon>Guillardia</taxon>
    </lineage>
</organism>
<evidence type="ECO:0000255" key="1">
    <source>
        <dbReference type="HAMAP-Rule" id="MF_01379"/>
    </source>
</evidence>
<name>PSBA_GUITH</name>
<accession>O78446</accession>